<comment type="function">
    <text evidence="1">Catalyzes the conversion of dihydroorotate to orotate with NAD(+) as electron acceptor.</text>
</comment>
<comment type="catalytic activity">
    <reaction>
        <text>(S)-dihydroorotate + NAD(+) = orotate + NADH + H(+)</text>
        <dbReference type="Rhea" id="RHEA:13513"/>
        <dbReference type="ChEBI" id="CHEBI:15378"/>
        <dbReference type="ChEBI" id="CHEBI:30839"/>
        <dbReference type="ChEBI" id="CHEBI:30864"/>
        <dbReference type="ChEBI" id="CHEBI:57540"/>
        <dbReference type="ChEBI" id="CHEBI:57945"/>
        <dbReference type="EC" id="1.3.1.14"/>
    </reaction>
</comment>
<comment type="cofactor">
    <cofactor evidence="1">
        <name>FMN</name>
        <dbReference type="ChEBI" id="CHEBI:58210"/>
    </cofactor>
    <text evidence="1">Binds 1 FMN per subunit.</text>
</comment>
<comment type="pathway">
    <text>Pyrimidine metabolism; UMP biosynthesis via de novo pathway; orotate from (S)-dihydroorotate (NAD(+) route): step 1/1.</text>
</comment>
<comment type="subunit">
    <text evidence="1">Heterotetramer of 2 PyrK and 2 PyrD type B subunits.</text>
</comment>
<comment type="subcellular location">
    <subcellularLocation>
        <location evidence="1">Cytoplasm</location>
    </subcellularLocation>
</comment>
<comment type="similarity">
    <text evidence="2">Belongs to the dihydroorotate dehydrogenase family. Type 1 subfamily.</text>
</comment>
<protein>
    <recommendedName>
        <fullName>Dihydroorotate dehydrogenase B (NAD(+)), catalytic subunit</fullName>
        <shortName>DHOD B</shortName>
        <shortName>DHODase B</shortName>
        <shortName>DHOdehase B</shortName>
        <ecNumber>1.3.1.14</ecNumber>
    </recommendedName>
    <alternativeName>
        <fullName>Dihydroorotate oxidase B</fullName>
    </alternativeName>
    <alternativeName>
        <fullName>Orotate reductase (NADH)</fullName>
    </alternativeName>
</protein>
<keyword id="KW-0963">Cytoplasm</keyword>
<keyword id="KW-0285">Flavoprotein</keyword>
<keyword id="KW-0288">FMN</keyword>
<keyword id="KW-0520">NAD</keyword>
<keyword id="KW-0560">Oxidoreductase</keyword>
<keyword id="KW-0665">Pyrimidine biosynthesis</keyword>
<proteinExistence type="inferred from homology"/>
<name>PYRDB_BACC1</name>
<evidence type="ECO:0000250" key="1"/>
<evidence type="ECO:0000305" key="2"/>
<gene>
    <name type="primary">pyrD</name>
    <name type="ordered locus">BCE_3929</name>
</gene>
<organism>
    <name type="scientific">Bacillus cereus (strain ATCC 10987 / NRS 248)</name>
    <dbReference type="NCBI Taxonomy" id="222523"/>
    <lineage>
        <taxon>Bacteria</taxon>
        <taxon>Bacillati</taxon>
        <taxon>Bacillota</taxon>
        <taxon>Bacilli</taxon>
        <taxon>Bacillales</taxon>
        <taxon>Bacillaceae</taxon>
        <taxon>Bacillus</taxon>
        <taxon>Bacillus cereus group</taxon>
    </lineage>
</organism>
<feature type="chain" id="PRO_1000024124" description="Dihydroorotate dehydrogenase B (NAD(+)), catalytic subunit">
    <location>
        <begin position="1"/>
        <end position="309"/>
    </location>
</feature>
<feature type="active site" description="Nucleophile">
    <location>
        <position position="130"/>
    </location>
</feature>
<feature type="binding site" evidence="1">
    <location>
        <position position="21"/>
    </location>
    <ligand>
        <name>FMN</name>
        <dbReference type="ChEBI" id="CHEBI:58210"/>
    </ligand>
</feature>
<feature type="binding site" evidence="1">
    <location>
        <begin position="45"/>
        <end position="46"/>
    </location>
    <ligand>
        <name>FMN</name>
        <dbReference type="ChEBI" id="CHEBI:58210"/>
    </ligand>
</feature>
<feature type="binding site" evidence="1">
    <location>
        <position position="45"/>
    </location>
    <ligand>
        <name>substrate</name>
    </ligand>
</feature>
<feature type="binding site" evidence="1">
    <location>
        <begin position="69"/>
        <end position="73"/>
    </location>
    <ligand>
        <name>substrate</name>
    </ligand>
</feature>
<feature type="binding site" evidence="1">
    <location>
        <position position="99"/>
    </location>
    <ligand>
        <name>FMN</name>
        <dbReference type="ChEBI" id="CHEBI:58210"/>
    </ligand>
</feature>
<feature type="binding site" evidence="1">
    <location>
        <position position="127"/>
    </location>
    <ligand>
        <name>FMN</name>
        <dbReference type="ChEBI" id="CHEBI:58210"/>
    </ligand>
</feature>
<feature type="binding site" evidence="1">
    <location>
        <position position="127"/>
    </location>
    <ligand>
        <name>substrate</name>
    </ligand>
</feature>
<feature type="binding site" evidence="1">
    <location>
        <position position="165"/>
    </location>
    <ligand>
        <name>FMN</name>
        <dbReference type="ChEBI" id="CHEBI:58210"/>
    </ligand>
</feature>
<feature type="binding site" evidence="1">
    <location>
        <position position="191"/>
    </location>
    <ligand>
        <name>FMN</name>
        <dbReference type="ChEBI" id="CHEBI:58210"/>
    </ligand>
</feature>
<feature type="binding site" evidence="1">
    <location>
        <begin position="192"/>
        <end position="193"/>
    </location>
    <ligand>
        <name>substrate</name>
    </ligand>
</feature>
<feature type="binding site" evidence="1">
    <location>
        <position position="217"/>
    </location>
    <ligand>
        <name>FMN</name>
        <dbReference type="ChEBI" id="CHEBI:58210"/>
    </ligand>
</feature>
<feature type="binding site" evidence="1">
    <location>
        <begin position="243"/>
        <end position="244"/>
    </location>
    <ligand>
        <name>FMN</name>
        <dbReference type="ChEBI" id="CHEBI:58210"/>
    </ligand>
</feature>
<feature type="binding site" evidence="1">
    <location>
        <begin position="265"/>
        <end position="266"/>
    </location>
    <ligand>
        <name>FMN</name>
        <dbReference type="ChEBI" id="CHEBI:58210"/>
    </ligand>
</feature>
<reference key="1">
    <citation type="journal article" date="2004" name="Nucleic Acids Res.">
        <title>The genome sequence of Bacillus cereus ATCC 10987 reveals metabolic adaptations and a large plasmid related to Bacillus anthracis pXO1.</title>
        <authorList>
            <person name="Rasko D.A."/>
            <person name="Ravel J."/>
            <person name="Oekstad O.A."/>
            <person name="Helgason E."/>
            <person name="Cer R.Z."/>
            <person name="Jiang L."/>
            <person name="Shores K.A."/>
            <person name="Fouts D.E."/>
            <person name="Tourasse N.J."/>
            <person name="Angiuoli S.V."/>
            <person name="Kolonay J.F."/>
            <person name="Nelson W.C."/>
            <person name="Kolstoe A.-B."/>
            <person name="Fraser C.M."/>
            <person name="Read T.D."/>
        </authorList>
    </citation>
    <scope>NUCLEOTIDE SEQUENCE [LARGE SCALE GENOMIC DNA]</scope>
    <source>
        <strain>ATCC 10987 / NRS 248</strain>
    </source>
</reference>
<dbReference type="EC" id="1.3.1.14"/>
<dbReference type="EMBL" id="AE017194">
    <property type="protein sequence ID" value="AAS42832.1"/>
    <property type="molecule type" value="Genomic_DNA"/>
</dbReference>
<dbReference type="SMR" id="Q732I5"/>
<dbReference type="KEGG" id="bca:BCE_3929"/>
<dbReference type="HOGENOM" id="CLU_042042_0_0_9"/>
<dbReference type="UniPathway" id="UPA00070">
    <property type="reaction ID" value="UER00945"/>
</dbReference>
<dbReference type="Proteomes" id="UP000002527">
    <property type="component" value="Chromosome"/>
</dbReference>
<dbReference type="GO" id="GO:0005737">
    <property type="term" value="C:cytoplasm"/>
    <property type="evidence" value="ECO:0007669"/>
    <property type="project" value="UniProtKB-SubCell"/>
</dbReference>
<dbReference type="GO" id="GO:0004589">
    <property type="term" value="F:dihydroorotate dehydrogenase (NAD+) activity"/>
    <property type="evidence" value="ECO:0007669"/>
    <property type="project" value="UniProtKB-EC"/>
</dbReference>
<dbReference type="GO" id="GO:0006207">
    <property type="term" value="P:'de novo' pyrimidine nucleobase biosynthetic process"/>
    <property type="evidence" value="ECO:0007669"/>
    <property type="project" value="InterPro"/>
</dbReference>
<dbReference type="GO" id="GO:0044205">
    <property type="term" value="P:'de novo' UMP biosynthetic process"/>
    <property type="evidence" value="ECO:0007669"/>
    <property type="project" value="UniProtKB-UniRule"/>
</dbReference>
<dbReference type="CDD" id="cd04740">
    <property type="entry name" value="DHOD_1B_like"/>
    <property type="match status" value="1"/>
</dbReference>
<dbReference type="FunFam" id="3.20.20.70:FF:000069">
    <property type="entry name" value="Dihydroorotate dehydrogenase"/>
    <property type="match status" value="1"/>
</dbReference>
<dbReference type="Gene3D" id="3.20.20.70">
    <property type="entry name" value="Aldolase class I"/>
    <property type="match status" value="1"/>
</dbReference>
<dbReference type="HAMAP" id="MF_00224">
    <property type="entry name" value="DHO_dh_type1"/>
    <property type="match status" value="1"/>
</dbReference>
<dbReference type="InterPro" id="IPR013785">
    <property type="entry name" value="Aldolase_TIM"/>
</dbReference>
<dbReference type="InterPro" id="IPR050074">
    <property type="entry name" value="DHO_dehydrogenase"/>
</dbReference>
<dbReference type="InterPro" id="IPR033888">
    <property type="entry name" value="DHOD_1B"/>
</dbReference>
<dbReference type="InterPro" id="IPR024920">
    <property type="entry name" value="Dihydroorotate_DH_1"/>
</dbReference>
<dbReference type="InterPro" id="IPR012135">
    <property type="entry name" value="Dihydroorotate_DH_1_2"/>
</dbReference>
<dbReference type="InterPro" id="IPR005720">
    <property type="entry name" value="Dihydroorotate_DH_cat"/>
</dbReference>
<dbReference type="InterPro" id="IPR001295">
    <property type="entry name" value="Dihydroorotate_DH_CS"/>
</dbReference>
<dbReference type="InterPro" id="IPR049622">
    <property type="entry name" value="Dihydroorotate_DH_I"/>
</dbReference>
<dbReference type="NCBIfam" id="NF005574">
    <property type="entry name" value="PRK07259.1"/>
    <property type="match status" value="1"/>
</dbReference>
<dbReference type="NCBIfam" id="TIGR01037">
    <property type="entry name" value="pyrD_sub1_fam"/>
    <property type="match status" value="1"/>
</dbReference>
<dbReference type="PANTHER" id="PTHR48109:SF1">
    <property type="entry name" value="DIHYDROOROTATE DEHYDROGENASE (FUMARATE)"/>
    <property type="match status" value="1"/>
</dbReference>
<dbReference type="PANTHER" id="PTHR48109">
    <property type="entry name" value="DIHYDROOROTATE DEHYDROGENASE (QUINONE), MITOCHONDRIAL-RELATED"/>
    <property type="match status" value="1"/>
</dbReference>
<dbReference type="Pfam" id="PF01180">
    <property type="entry name" value="DHO_dh"/>
    <property type="match status" value="1"/>
</dbReference>
<dbReference type="PIRSF" id="PIRSF000164">
    <property type="entry name" value="DHO_oxidase"/>
    <property type="match status" value="1"/>
</dbReference>
<dbReference type="SUPFAM" id="SSF51395">
    <property type="entry name" value="FMN-linked oxidoreductases"/>
    <property type="match status" value="1"/>
</dbReference>
<dbReference type="PROSITE" id="PS00911">
    <property type="entry name" value="DHODEHASE_1"/>
    <property type="match status" value="1"/>
</dbReference>
<dbReference type="PROSITE" id="PS00912">
    <property type="entry name" value="DHODEHASE_2"/>
    <property type="match status" value="1"/>
</dbReference>
<sequence length="309" mass="32990">MNRLQVELPGLSLKNPIIPASGCFGFGREYAQFYDLSVLGSIMIKATTEQPRYGNPTPRVAETPGGMLNAIGLQNPGLEKVMNSELPWLEQFDLPIIANVAGSQAEDYVAVAKEISKAPNVHALELNISCPNVKTGGIAFGTNPEIAADLTKRVKEVSEVPVYVKLSPNVANIVEIAKAIENAGADGLTMINTLLGMRLDLKTAKPILANRTGGLSGPAIKPVAIRMVHEVSQAVNIPIIGMGGIETAEDVIEFFYAGASAVAVGTANFIDPFVCPTIIEELPALLDELGFDHISECQGRSWKQTCHSR</sequence>
<accession>Q732I5</accession>